<name>RBSD_YERP3</name>
<sequence>MKKGVLLNADISAVISRLGHTDQIVIGDAGLPIPATTTRIDLALTRGVPGFLQVVDVVTQEMQVENAYLAEEIVKNNPQLHEALLVLLTQLEQRQENQIALRYISHEAFKEQTKQSRAVIRSGECSPFANIILGSGVTF</sequence>
<proteinExistence type="inferred from homology"/>
<protein>
    <recommendedName>
        <fullName evidence="1">D-ribose pyranase</fullName>
        <ecNumber evidence="1">5.4.99.62</ecNumber>
    </recommendedName>
</protein>
<gene>
    <name evidence="1" type="primary">rbsD</name>
    <name type="ordered locus">YpsIP31758_0007</name>
</gene>
<dbReference type="EC" id="5.4.99.62" evidence="1"/>
<dbReference type="EMBL" id="CP000720">
    <property type="protein sequence ID" value="ABS49282.1"/>
    <property type="molecule type" value="Genomic_DNA"/>
</dbReference>
<dbReference type="RefSeq" id="WP_002212252.1">
    <property type="nucleotide sequence ID" value="NC_009708.1"/>
</dbReference>
<dbReference type="SMR" id="A7FCN3"/>
<dbReference type="GeneID" id="57974587"/>
<dbReference type="KEGG" id="ypi:YpsIP31758_0007"/>
<dbReference type="HOGENOM" id="CLU_135498_0_0_6"/>
<dbReference type="UniPathway" id="UPA00916">
    <property type="reaction ID" value="UER00888"/>
</dbReference>
<dbReference type="Proteomes" id="UP000002412">
    <property type="component" value="Chromosome"/>
</dbReference>
<dbReference type="GO" id="GO:0005829">
    <property type="term" value="C:cytosol"/>
    <property type="evidence" value="ECO:0007669"/>
    <property type="project" value="TreeGrafter"/>
</dbReference>
<dbReference type="GO" id="GO:0062193">
    <property type="term" value="F:D-ribose pyranase activity"/>
    <property type="evidence" value="ECO:0007669"/>
    <property type="project" value="UniProtKB-EC"/>
</dbReference>
<dbReference type="GO" id="GO:0016872">
    <property type="term" value="F:intramolecular lyase activity"/>
    <property type="evidence" value="ECO:0007669"/>
    <property type="project" value="UniProtKB-UniRule"/>
</dbReference>
<dbReference type="GO" id="GO:0048029">
    <property type="term" value="F:monosaccharide binding"/>
    <property type="evidence" value="ECO:0007669"/>
    <property type="project" value="InterPro"/>
</dbReference>
<dbReference type="GO" id="GO:0019303">
    <property type="term" value="P:D-ribose catabolic process"/>
    <property type="evidence" value="ECO:0007669"/>
    <property type="project" value="UniProtKB-UniRule"/>
</dbReference>
<dbReference type="FunFam" id="3.40.1650.10:FF:000002">
    <property type="entry name" value="D-ribose pyranase"/>
    <property type="match status" value="1"/>
</dbReference>
<dbReference type="Gene3D" id="3.40.1650.10">
    <property type="entry name" value="RbsD-like domain"/>
    <property type="match status" value="1"/>
</dbReference>
<dbReference type="HAMAP" id="MF_01661">
    <property type="entry name" value="D_rib_pyranase"/>
    <property type="match status" value="1"/>
</dbReference>
<dbReference type="InterPro" id="IPR023064">
    <property type="entry name" value="D-ribose_pyranase"/>
</dbReference>
<dbReference type="InterPro" id="IPR023750">
    <property type="entry name" value="RbsD-like_sf"/>
</dbReference>
<dbReference type="InterPro" id="IPR007721">
    <property type="entry name" value="RbsD_FucU"/>
</dbReference>
<dbReference type="NCBIfam" id="NF008761">
    <property type="entry name" value="PRK11797.1"/>
    <property type="match status" value="1"/>
</dbReference>
<dbReference type="PANTHER" id="PTHR37831">
    <property type="entry name" value="D-RIBOSE PYRANASE"/>
    <property type="match status" value="1"/>
</dbReference>
<dbReference type="PANTHER" id="PTHR37831:SF1">
    <property type="entry name" value="D-RIBOSE PYRANASE"/>
    <property type="match status" value="1"/>
</dbReference>
<dbReference type="Pfam" id="PF05025">
    <property type="entry name" value="RbsD_FucU"/>
    <property type="match status" value="1"/>
</dbReference>
<dbReference type="SUPFAM" id="SSF102546">
    <property type="entry name" value="RbsD-like"/>
    <property type="match status" value="1"/>
</dbReference>
<organism>
    <name type="scientific">Yersinia pseudotuberculosis serotype O:1b (strain IP 31758)</name>
    <dbReference type="NCBI Taxonomy" id="349747"/>
    <lineage>
        <taxon>Bacteria</taxon>
        <taxon>Pseudomonadati</taxon>
        <taxon>Pseudomonadota</taxon>
        <taxon>Gammaproteobacteria</taxon>
        <taxon>Enterobacterales</taxon>
        <taxon>Yersiniaceae</taxon>
        <taxon>Yersinia</taxon>
    </lineage>
</organism>
<feature type="chain" id="PRO_0000346308" description="D-ribose pyranase">
    <location>
        <begin position="1"/>
        <end position="139"/>
    </location>
</feature>
<feature type="active site" description="Proton donor" evidence="1">
    <location>
        <position position="20"/>
    </location>
</feature>
<feature type="binding site" evidence="1">
    <location>
        <position position="28"/>
    </location>
    <ligand>
        <name>substrate</name>
    </ligand>
</feature>
<feature type="binding site" evidence="1">
    <location>
        <position position="106"/>
    </location>
    <ligand>
        <name>substrate</name>
    </ligand>
</feature>
<feature type="binding site" evidence="1">
    <location>
        <begin position="128"/>
        <end position="130"/>
    </location>
    <ligand>
        <name>substrate</name>
    </ligand>
</feature>
<evidence type="ECO:0000255" key="1">
    <source>
        <dbReference type="HAMAP-Rule" id="MF_01661"/>
    </source>
</evidence>
<comment type="function">
    <text evidence="1">Catalyzes the interconversion of beta-pyran and beta-furan forms of D-ribose.</text>
</comment>
<comment type="catalytic activity">
    <reaction evidence="1">
        <text>beta-D-ribopyranose = beta-D-ribofuranose</text>
        <dbReference type="Rhea" id="RHEA:25432"/>
        <dbReference type="ChEBI" id="CHEBI:27476"/>
        <dbReference type="ChEBI" id="CHEBI:47002"/>
        <dbReference type="EC" id="5.4.99.62"/>
    </reaction>
</comment>
<comment type="pathway">
    <text evidence="1">Carbohydrate metabolism; D-ribose degradation; D-ribose 5-phosphate from beta-D-ribopyranose: step 1/2.</text>
</comment>
<comment type="subunit">
    <text evidence="1">Homodecamer.</text>
</comment>
<comment type="subcellular location">
    <subcellularLocation>
        <location evidence="1">Cytoplasm</location>
    </subcellularLocation>
</comment>
<comment type="similarity">
    <text evidence="1">Belongs to the RbsD / FucU family. RbsD subfamily.</text>
</comment>
<reference key="1">
    <citation type="journal article" date="2007" name="PLoS Genet.">
        <title>The complete genome sequence of Yersinia pseudotuberculosis IP31758, the causative agent of Far East scarlet-like fever.</title>
        <authorList>
            <person name="Eppinger M."/>
            <person name="Rosovitz M.J."/>
            <person name="Fricke W.F."/>
            <person name="Rasko D.A."/>
            <person name="Kokorina G."/>
            <person name="Fayolle C."/>
            <person name="Lindler L.E."/>
            <person name="Carniel E."/>
            <person name="Ravel J."/>
        </authorList>
    </citation>
    <scope>NUCLEOTIDE SEQUENCE [LARGE SCALE GENOMIC DNA]</scope>
    <source>
        <strain>IP 31758</strain>
    </source>
</reference>
<keyword id="KW-0119">Carbohydrate metabolism</keyword>
<keyword id="KW-0963">Cytoplasm</keyword>
<keyword id="KW-0413">Isomerase</keyword>
<accession>A7FCN3</accession>